<name>OM26_HAEIN</name>
<reference key="1">
    <citation type="journal article" date="1995" name="Science">
        <title>Whole-genome random sequencing and assembly of Haemophilus influenzae Rd.</title>
        <authorList>
            <person name="Fleischmann R.D."/>
            <person name="Adams M.D."/>
            <person name="White O."/>
            <person name="Clayton R.A."/>
            <person name="Kirkness E.F."/>
            <person name="Kerlavage A.R."/>
            <person name="Bult C.J."/>
            <person name="Tomb J.-F."/>
            <person name="Dougherty B.A."/>
            <person name="Merrick J.M."/>
            <person name="McKenney K."/>
            <person name="Sutton G.G."/>
            <person name="FitzHugh W."/>
            <person name="Fields C.A."/>
            <person name="Gocayne J.D."/>
            <person name="Scott J.D."/>
            <person name="Shirley R."/>
            <person name="Liu L.-I."/>
            <person name="Glodek A."/>
            <person name="Kelley J.M."/>
            <person name="Weidman J.F."/>
            <person name="Phillips C.A."/>
            <person name="Spriggs T."/>
            <person name="Hedblom E."/>
            <person name="Cotton M.D."/>
            <person name="Utterback T.R."/>
            <person name="Hanna M.C."/>
            <person name="Nguyen D.T."/>
            <person name="Saudek D.M."/>
            <person name="Brandon R.C."/>
            <person name="Fine L.D."/>
            <person name="Fritchman J.L."/>
            <person name="Fuhrmann J.L."/>
            <person name="Geoghagen N.S.M."/>
            <person name="Gnehm C.L."/>
            <person name="McDonald L.A."/>
            <person name="Small K.V."/>
            <person name="Fraser C.M."/>
            <person name="Smith H.O."/>
            <person name="Venter J.C."/>
        </authorList>
    </citation>
    <scope>NUCLEOTIDE SEQUENCE [LARGE SCALE GENOMIC DNA]</scope>
    <source>
        <strain>ATCC 51907 / DSM 11121 / KW20 / Rd</strain>
    </source>
</reference>
<reference key="2">
    <citation type="journal article" date="1999" name="Infect. Immun.">
        <title>Characterization of the gene encoding a 26-kilodalton protein (OMP26) from nontypeable Haemophilus influenzae and immune responses to the recombinant protein.</title>
        <authorList>
            <person name="El-Adhami W."/>
            <person name="Kyd J.M."/>
            <person name="Bastin D.A."/>
            <person name="Cripps A.W."/>
        </authorList>
    </citation>
    <scope>NUCLEOTIDE SEQUENCE [GENOMIC DNA]</scope>
    <scope>CHARACTERIZATION</scope>
    <source>
        <strain>NTHi 289</strain>
        <strain>UC1</strain>
        <strain>UC10</strain>
        <strain>UC2</strain>
    </source>
</reference>
<reference key="3">
    <citation type="journal article" date="2000" name="Electrophoresis">
        <title>Two-dimensional map of the proteome of Haemophilus influenzae.</title>
        <authorList>
            <person name="Langen H."/>
            <person name="Takacs B."/>
            <person name="Evers S."/>
            <person name="Berndt P."/>
            <person name="Lahm H.W."/>
            <person name="Wipf B."/>
            <person name="Gray C."/>
            <person name="Fountoulakis M."/>
        </authorList>
    </citation>
    <scope>PROTEIN SEQUENCE OF 24-30</scope>
    <source>
        <strain>ATCC 51907 / DSM 11121 / KW20 / Rd</strain>
    </source>
</reference>
<accession>Q57483</accession>
<accession>Q9S690</accession>
<accession>Q9S691</accession>
<accession>Q9S692</accession>
<accession>Q9S699</accession>
<dbReference type="EMBL" id="L42023">
    <property type="protein sequence ID" value="AAC22574.1"/>
    <property type="molecule type" value="Genomic_DNA"/>
</dbReference>
<dbReference type="EMBL" id="AF109085">
    <property type="protein sequence ID" value="AAD23967.1"/>
    <property type="molecule type" value="Genomic_DNA"/>
</dbReference>
<dbReference type="EMBL" id="AF109086">
    <property type="protein sequence ID" value="AAD23968.1"/>
    <property type="molecule type" value="Genomic_DNA"/>
</dbReference>
<dbReference type="EMBL" id="AF109087">
    <property type="protein sequence ID" value="AAD23969.1"/>
    <property type="molecule type" value="Genomic_DNA"/>
</dbReference>
<dbReference type="EMBL" id="AF109094">
    <property type="protein sequence ID" value="AAD23976.1"/>
    <property type="molecule type" value="Genomic_DNA"/>
</dbReference>
<dbReference type="PIR" id="E64102">
    <property type="entry name" value="E64102"/>
</dbReference>
<dbReference type="RefSeq" id="NP_439076.1">
    <property type="nucleotide sequence ID" value="NC_000907.1"/>
</dbReference>
<dbReference type="SMR" id="Q57483"/>
<dbReference type="STRING" id="71421.HI_0916"/>
<dbReference type="EnsemblBacteria" id="AAC22574">
    <property type="protein sequence ID" value="AAC22574"/>
    <property type="gene ID" value="HI_0916"/>
</dbReference>
<dbReference type="KEGG" id="hin:HI_0916"/>
<dbReference type="PATRIC" id="fig|71421.8.peg.957"/>
<dbReference type="eggNOG" id="COG2825">
    <property type="taxonomic scope" value="Bacteria"/>
</dbReference>
<dbReference type="HOGENOM" id="CLU_101388_2_0_6"/>
<dbReference type="OrthoDB" id="5689656at2"/>
<dbReference type="PhylomeDB" id="Q57483"/>
<dbReference type="BioCyc" id="HINF71421:G1GJ1-955-MONOMER"/>
<dbReference type="Proteomes" id="UP000000579">
    <property type="component" value="Chromosome"/>
</dbReference>
<dbReference type="GO" id="GO:0009279">
    <property type="term" value="C:cell outer membrane"/>
    <property type="evidence" value="ECO:0007669"/>
    <property type="project" value="UniProtKB-SubCell"/>
</dbReference>
<dbReference type="GO" id="GO:0051082">
    <property type="term" value="F:unfolded protein binding"/>
    <property type="evidence" value="ECO:0007669"/>
    <property type="project" value="InterPro"/>
</dbReference>
<dbReference type="GO" id="GO:0061077">
    <property type="term" value="P:chaperone-mediated protein folding"/>
    <property type="evidence" value="ECO:0000318"/>
    <property type="project" value="GO_Central"/>
</dbReference>
<dbReference type="GO" id="GO:0050821">
    <property type="term" value="P:protein stabilization"/>
    <property type="evidence" value="ECO:0000318"/>
    <property type="project" value="GO_Central"/>
</dbReference>
<dbReference type="Gene3D" id="3.30.910.20">
    <property type="entry name" value="Skp domain"/>
    <property type="match status" value="2"/>
</dbReference>
<dbReference type="InterPro" id="IPR005632">
    <property type="entry name" value="Chaperone_Skp"/>
</dbReference>
<dbReference type="InterPro" id="IPR024930">
    <property type="entry name" value="Skp_dom_sf"/>
</dbReference>
<dbReference type="PANTHER" id="PTHR35089">
    <property type="entry name" value="CHAPERONE PROTEIN SKP"/>
    <property type="match status" value="1"/>
</dbReference>
<dbReference type="PANTHER" id="PTHR35089:SF1">
    <property type="entry name" value="CHAPERONE PROTEIN SKP"/>
    <property type="match status" value="1"/>
</dbReference>
<dbReference type="Pfam" id="PF03938">
    <property type="entry name" value="OmpH"/>
    <property type="match status" value="1"/>
</dbReference>
<dbReference type="PIRSF" id="PIRSF002094">
    <property type="entry name" value="OMP26_Skp"/>
    <property type="match status" value="1"/>
</dbReference>
<dbReference type="SMART" id="SM00935">
    <property type="entry name" value="OmpH"/>
    <property type="match status" value="1"/>
</dbReference>
<dbReference type="SUPFAM" id="SSF111384">
    <property type="entry name" value="OmpH-like"/>
    <property type="match status" value="1"/>
</dbReference>
<gene>
    <name type="primary">omp26</name>
    <name type="synonym">skp</name>
    <name type="ordered locus">HI_0916</name>
</gene>
<organism>
    <name type="scientific">Haemophilus influenzae (strain ATCC 51907 / DSM 11121 / KW20 / Rd)</name>
    <dbReference type="NCBI Taxonomy" id="71421"/>
    <lineage>
        <taxon>Bacteria</taxon>
        <taxon>Pseudomonadati</taxon>
        <taxon>Pseudomonadota</taxon>
        <taxon>Gammaproteobacteria</taxon>
        <taxon>Pasteurellales</taxon>
        <taxon>Pasteurellaceae</taxon>
        <taxon>Haemophilus</taxon>
    </lineage>
</organism>
<protein>
    <recommendedName>
        <fullName>Outer membrane protein 26</fullName>
    </recommendedName>
</protein>
<feature type="signal peptide" evidence="1">
    <location>
        <begin position="1"/>
        <end position="23"/>
    </location>
</feature>
<feature type="chain" id="PRO_0000020183" description="Outer membrane protein 26">
    <location>
        <begin position="24"/>
        <end position="197"/>
    </location>
</feature>
<feature type="sequence variant" description="In strain: NTHI 289 and UC1.">
    <original>Q</original>
    <variation>E</variation>
    <location>
        <position position="102"/>
    </location>
</feature>
<feature type="sequence variant" description="In strain: UC1.">
    <original>D</original>
    <variation>N</variation>
    <location>
        <position position="146"/>
    </location>
</feature>
<feature type="sequence variant" description="In strain: NTHI 289 and UC10.">
    <original>K</original>
    <variation>R</variation>
    <location>
        <position position="157"/>
    </location>
</feature>
<feature type="sequence variant" description="In strain: NTHI 289, UC1 and UC2.">
    <original>I</original>
    <variation>V</variation>
    <location>
        <position position="170"/>
    </location>
</feature>
<sequence length="197" mass="21718">MKNIAKVTALALGIALASGYASAEEKIAFINAGYIFQHHPDRQAVADKLDAEFKPVAEKLAASKKEVDDKIAAARKKVEAKVAALEKDAPRLRQADIQKRQQEINKLGAAEDAELQKLMQEQDKKVQEFQAQNEKRQAEERGKLLDSIQTATNNLAKAKGYTYVLDANSIVFAVEGKDITEEVLKSIPASEKAQEKK</sequence>
<comment type="subcellular location">
    <subcellularLocation>
        <location>Cell outer membrane</location>
    </subcellularLocation>
</comment>
<comment type="similarity">
    <text evidence="2">Belongs to the Skp family.</text>
</comment>
<keyword id="KW-0998">Cell outer membrane</keyword>
<keyword id="KW-0903">Direct protein sequencing</keyword>
<keyword id="KW-0472">Membrane</keyword>
<keyword id="KW-1185">Reference proteome</keyword>
<keyword id="KW-0732">Signal</keyword>
<proteinExistence type="evidence at protein level"/>
<evidence type="ECO:0000269" key="1">
    <source>
    </source>
</evidence>
<evidence type="ECO:0000305" key="2"/>